<keyword id="KW-0007">Acetylation</keyword>
<keyword id="KW-0013">ADP-ribosylation</keyword>
<keyword id="KW-0044">Antibiotic</keyword>
<keyword id="KW-0929">Antimicrobial</keyword>
<keyword id="KW-0158">Chromosome</keyword>
<keyword id="KW-0238">DNA-binding</keyword>
<keyword id="KW-0325">Glycoprotein</keyword>
<keyword id="KW-0379">Hydroxylation</keyword>
<keyword id="KW-1017">Isopeptide bond</keyword>
<keyword id="KW-0488">Methylation</keyword>
<keyword id="KW-0544">Nucleosome core</keyword>
<keyword id="KW-0539">Nucleus</keyword>
<keyword id="KW-0597">Phosphoprotein</keyword>
<keyword id="KW-1185">Reference proteome</keyword>
<keyword id="KW-0832">Ubl conjugation</keyword>
<protein>
    <recommendedName>
        <fullName>Histone H2B type 2-E</fullName>
    </recommendedName>
    <alternativeName>
        <fullName evidence="7">H2B-clustered histone 21</fullName>
    </alternativeName>
</protein>
<reference key="1">
    <citation type="submission" date="2004-11" db="EMBL/GenBank/DDBJ databases">
        <authorList>
            <consortium name="The German cDNA consortium"/>
        </authorList>
    </citation>
    <scope>NUCLEOTIDE SEQUENCE [LARGE SCALE MRNA]</scope>
    <source>
        <tissue>Kidney</tissue>
    </source>
</reference>
<feature type="initiator methionine" description="Removed" evidence="2">
    <location>
        <position position="1"/>
    </location>
</feature>
<feature type="chain" id="PRO_0000244841" description="Histone H2B type 2-E">
    <location>
        <begin position="2"/>
        <end position="126"/>
    </location>
</feature>
<feature type="region of interest" description="Disordered" evidence="13">
    <location>
        <begin position="1"/>
        <end position="32"/>
    </location>
</feature>
<feature type="compositionally biased region" description="Low complexity" evidence="13">
    <location>
        <begin position="1"/>
        <end position="12"/>
    </location>
</feature>
<feature type="modified residue" description="N-acetylproline" evidence="2">
    <location>
        <position position="2"/>
    </location>
</feature>
<feature type="modified residue" description="ADP-ribosyl glutamic acid" evidence="3">
    <location>
        <position position="3"/>
    </location>
</feature>
<feature type="modified residue" description="N6-(2-hydroxyisobutyryl)lysine; alternate" evidence="3">
    <location>
        <position position="6"/>
    </location>
</feature>
<feature type="modified residue" description="N6-(beta-hydroxybutyryl)lysine; alternate" evidence="9">
    <location>
        <position position="6"/>
    </location>
</feature>
<feature type="modified residue" description="N6-acetyllysine; alternate" evidence="7">
    <location>
        <position position="6"/>
    </location>
</feature>
<feature type="modified residue" description="N6-butyryllysine; alternate" evidence="3">
    <location>
        <position position="6"/>
    </location>
</feature>
<feature type="modified residue" description="N6-crotonyllysine; alternate" evidence="3">
    <location>
        <position position="6"/>
    </location>
</feature>
<feature type="modified residue" description="N6-lactoyllysine; alternate" evidence="3">
    <location>
        <position position="6"/>
    </location>
</feature>
<feature type="modified residue" description="ADP-ribosylserine" evidence="3">
    <location>
        <position position="7"/>
    </location>
</feature>
<feature type="modified residue" description="N6-(beta-hydroxybutyryl)lysine; alternate" evidence="9">
    <location>
        <position position="12"/>
    </location>
</feature>
<feature type="modified residue" description="N6-acetyllysine; alternate" evidence="7">
    <location>
        <position position="12"/>
    </location>
</feature>
<feature type="modified residue" description="N6-crotonyllysine; alternate" evidence="3">
    <location>
        <position position="12"/>
    </location>
</feature>
<feature type="modified residue" description="N6-lactoyllysine; alternate" evidence="3">
    <location>
        <position position="12"/>
    </location>
</feature>
<feature type="modified residue" description="N6-(2-hydroxyisobutyryl)lysine; alternate" evidence="3">
    <location>
        <position position="13"/>
    </location>
</feature>
<feature type="modified residue" description="N6-acetyllysine; alternate" evidence="7">
    <location>
        <position position="13"/>
    </location>
</feature>
<feature type="modified residue" description="N6-crotonyllysine; alternate" evidence="3">
    <location>
        <position position="13"/>
    </location>
</feature>
<feature type="modified residue" description="Phosphoserine; by STK4/MST1" evidence="7">
    <location>
        <position position="15"/>
    </location>
</feature>
<feature type="modified residue" description="N6-acetyllysine; alternate" evidence="7">
    <location>
        <position position="16"/>
    </location>
</feature>
<feature type="modified residue" description="N6-crotonyllysine; alternate" evidence="3">
    <location>
        <position position="16"/>
    </location>
</feature>
<feature type="modified residue" description="N6-lactoyllysine; alternate" evidence="3">
    <location>
        <position position="16"/>
    </location>
</feature>
<feature type="modified residue" description="N6-acetyllysine; alternate" evidence="7">
    <location>
        <position position="17"/>
    </location>
</feature>
<feature type="modified residue" description="N6-crotonyllysine; alternate" evidence="3">
    <location>
        <position position="17"/>
    </location>
</feature>
<feature type="modified residue" description="N6-glutaryllysine; alternate" evidence="3">
    <location>
        <position position="17"/>
    </location>
</feature>
<feature type="modified residue" description="N6-lactoyllysine; alternate" evidence="3">
    <location>
        <position position="17"/>
    </location>
</feature>
<feature type="modified residue" description="N6-(2-hydroxyisobutyryl)lysine; alternate" evidence="3">
    <location>
        <position position="21"/>
    </location>
</feature>
<feature type="modified residue" description="N6-(beta-hydroxybutyryl)lysine; alternate" evidence="9">
    <location>
        <position position="21"/>
    </location>
</feature>
<feature type="modified residue" description="N6-acetyllysine; alternate" evidence="7">
    <location>
        <position position="21"/>
    </location>
</feature>
<feature type="modified residue" description="N6-butyryllysine; alternate" evidence="3">
    <location>
        <position position="21"/>
    </location>
</feature>
<feature type="modified residue" description="N6-crotonyllysine; alternate" evidence="3">
    <location>
        <position position="21"/>
    </location>
</feature>
<feature type="modified residue" description="N6-lactoyllysine; alternate" evidence="3">
    <location>
        <position position="21"/>
    </location>
</feature>
<feature type="modified residue" description="N6-(2-hydroxyisobutyryl)lysine; alternate" evidence="3">
    <location>
        <position position="24"/>
    </location>
</feature>
<feature type="modified residue" description="N6-acetyllysine; alternate" evidence="3">
    <location>
        <position position="24"/>
    </location>
</feature>
<feature type="modified residue" description="N6-crotonyllysine; alternate" evidence="3">
    <location>
        <position position="24"/>
    </location>
</feature>
<feature type="modified residue" description="N6-lactoyllysine; alternate" evidence="3">
    <location>
        <position position="24"/>
    </location>
</feature>
<feature type="modified residue" description="N6-(2-hydroxyisobutyryl)lysine" evidence="3">
    <location>
        <position position="25"/>
    </location>
</feature>
<feature type="modified residue" description="N6-(2-hydroxyisobutyryl)lysine; alternate" evidence="3">
    <location>
        <position position="35"/>
    </location>
</feature>
<feature type="modified residue" description="N6-(beta-hydroxybutyryl)lysine; alternate" evidence="9">
    <location>
        <position position="35"/>
    </location>
</feature>
<feature type="modified residue" description="N6-crotonyllysine; alternate" evidence="3">
    <location>
        <position position="35"/>
    </location>
</feature>
<feature type="modified residue" description="N6-glutaryllysine; alternate" evidence="3">
    <location>
        <position position="35"/>
    </location>
</feature>
<feature type="modified residue" description="N6-succinyllysine; alternate" evidence="7">
    <location>
        <position position="35"/>
    </location>
</feature>
<feature type="modified residue" description="PolyADP-ribosyl glutamic acid" evidence="9">
    <location>
        <position position="36"/>
    </location>
</feature>
<feature type="modified residue" description="Phosphoserine; by AMPK" evidence="10">
    <location>
        <position position="37"/>
    </location>
</feature>
<feature type="modified residue" description="N6-(2-hydroxyisobutyryl)lysine; alternate" evidence="3">
    <location>
        <position position="44"/>
    </location>
</feature>
<feature type="modified residue" description="N6-glutaryllysine; alternate" evidence="3">
    <location>
        <position position="44"/>
    </location>
</feature>
<feature type="modified residue" description="N6-lactoyllysine; alternate" evidence="3">
    <location>
        <position position="44"/>
    </location>
</feature>
<feature type="modified residue" description="N6-(2-hydroxyisobutyryl)lysine; alternate" evidence="3">
    <location>
        <position position="47"/>
    </location>
</feature>
<feature type="modified residue" description="N6-glutaryllysine; alternate" evidence="3">
    <location>
        <position position="47"/>
    </location>
</feature>
<feature type="modified residue" description="N6-methyllysine; alternate" evidence="7">
    <location>
        <position position="47"/>
    </location>
</feature>
<feature type="modified residue" description="N6,N6-dimethyllysine; alternate" evidence="7">
    <location>
        <position position="58"/>
    </location>
</feature>
<feature type="modified residue" description="N6-(2-hydroxyisobutyryl)lysine; alternate" evidence="3">
    <location>
        <position position="58"/>
    </location>
</feature>
<feature type="modified residue" description="Dimethylated arginine" evidence="12">
    <location>
        <position position="80"/>
    </location>
</feature>
<feature type="modified residue" description="N6,N6,N6-trimethyllysine; alternate" evidence="12">
    <location>
        <position position="86"/>
    </location>
</feature>
<feature type="modified residue" description="N6-(2-hydroxyisobutyryl)lysine; alternate" evidence="3">
    <location>
        <position position="86"/>
    </location>
</feature>
<feature type="modified residue" description="N6-acetyllysine; alternate" evidence="12">
    <location>
        <position position="86"/>
    </location>
</feature>
<feature type="modified residue" description="N6-lactoyllysine; alternate" evidence="3">
    <location>
        <position position="86"/>
    </location>
</feature>
<feature type="modified residue" description="Omega-N-methylarginine" evidence="12">
    <location>
        <position position="87"/>
    </location>
</feature>
<feature type="modified residue" description="Omega-N-methylarginine" evidence="12">
    <location>
        <position position="93"/>
    </location>
</feature>
<feature type="modified residue" description="N6-(2-hydroxyisobutyryl)lysine; alternate" evidence="3">
    <location>
        <position position="109"/>
    </location>
</feature>
<feature type="modified residue" description="N6-glutaryllysine; alternate" evidence="3">
    <location>
        <position position="109"/>
    </location>
</feature>
<feature type="modified residue" description="N6-lactoyllysine; alternate" evidence="3">
    <location>
        <position position="109"/>
    </location>
</feature>
<feature type="modified residue" description="N6-methyllysine; alternate" evidence="7">
    <location>
        <position position="109"/>
    </location>
</feature>
<feature type="modified residue" description="Phosphothreonine" evidence="6">
    <location>
        <position position="116"/>
    </location>
</feature>
<feature type="modified residue" description="N6-(2-hydroxyisobutyryl)lysine; alternate" evidence="3">
    <location>
        <position position="117"/>
    </location>
</feature>
<feature type="modified residue" description="N6-(beta-hydroxybutyryl)lysine; alternate" evidence="9">
    <location>
        <position position="117"/>
    </location>
</feature>
<feature type="modified residue" description="N6-glutaryllysine; alternate" evidence="3">
    <location>
        <position position="117"/>
    </location>
</feature>
<feature type="modified residue" description="N6-lactoyllysine; alternate" evidence="3">
    <location>
        <position position="117"/>
    </location>
</feature>
<feature type="modified residue" description="N6-methylated lysine; alternate" evidence="6">
    <location>
        <position position="117"/>
    </location>
</feature>
<feature type="modified residue" description="N6-succinyllysine; alternate" evidence="7">
    <location>
        <position position="117"/>
    </location>
</feature>
<feature type="modified residue" description="N6-(2-hydroxyisobutyryl)lysine; alternate" evidence="3">
    <location>
        <position position="121"/>
    </location>
</feature>
<feature type="modified residue" description="N6-glutaryllysine; alternate" evidence="3">
    <location>
        <position position="121"/>
    </location>
</feature>
<feature type="modified residue" description="N6-lactoyllysine; alternate" evidence="3">
    <location>
        <position position="121"/>
    </location>
</feature>
<feature type="modified residue" description="N6-succinyllysine; alternate" evidence="7">
    <location>
        <position position="121"/>
    </location>
</feature>
<feature type="glycosylation site" description="O-linked (GlcNAc) serine" evidence="5">
    <location>
        <position position="113"/>
    </location>
</feature>
<feature type="cross-link" description="Glycyl lysine isopeptide (Lys-Gly) (interchain with G-Cter in SUMO2); alternate" evidence="4">
    <location>
        <position position="6"/>
    </location>
</feature>
<feature type="cross-link" description="Glycyl lysine isopeptide (Lys-Gly) (interchain with G-Cter in SUMO2); alternate" evidence="8">
    <location>
        <position position="21"/>
    </location>
</feature>
<feature type="cross-link" description="Glycyl lysine isopeptide (Lys-Gly) (interchain with G-Cter in ubiquitin); alternate" evidence="7">
    <location>
        <position position="35"/>
    </location>
</feature>
<feature type="cross-link" description="Glycyl lysine isopeptide (Lys-Gly) (interchain with G-Cter in ubiquitin); alternate" evidence="7">
    <location>
        <position position="121"/>
    </location>
</feature>
<accession>Q5RCP8</accession>
<sequence>MPEPAKSAPAPKKGSKKAVTKAQKKDGKKRKRSCKESYSIYVYKVLKQVHPDTGISSKAMGIMNSFVNDIFERIAGEASRLAHYNKRSTITSREIQTAVRLLLPGELAKHAVSEGTKAVTKYTSSK</sequence>
<comment type="function">
    <text>Core component of nucleosome. Nucleosomes wrap and compact DNA into chromatin, limiting DNA accessibility to the cellular machineries which require DNA as a template. Histones thereby play a central role in transcription regulation, DNA repair, DNA replication and chromosomal stability. DNA accessibility is regulated via a complex set of post-translational modifications of histones, also called histone code, and nucleosome remodeling.</text>
</comment>
<comment type="function">
    <text evidence="1">Has broad antibacterial activity. May contribute to the formation of the functional antimicrobial barrier of the colonic epithelium, and to the bactericidal activity of amniotic fluid (By similarity).</text>
</comment>
<comment type="subunit">
    <text>The nucleosome is a histone octamer containing two molecules each of H2A, H2B, H3 and H4 assembled in one H3-H4 heterotetramer and two H2A-H2B heterodimers. The octamer wraps approximately 147 bp of DNA.</text>
</comment>
<comment type="subcellular location">
    <subcellularLocation>
        <location>Nucleus</location>
    </subcellularLocation>
    <subcellularLocation>
        <location>Chromosome</location>
    </subcellularLocation>
</comment>
<comment type="PTM">
    <text evidence="3">Monoubiquitination at Lys-35 (H2BK34Ub) by the MSL1/MSL2 dimer is required for histone H3 'Lys-4' (H3K4me) and 'Lys-79' (H3K79me) methylation and transcription activation at specific gene loci, such as HOXA9 and MEIS1 loci. Similarly, monoubiquitination at Lys-121 (H2BK120Ub) by the RNF20/40 complex gives a specific tag for epigenetic transcriptional activation and is also prerequisite for histone H3 'Lys-4' and 'Lys-79' methylation. It also functions cooperatively with the FACT dimer to stimulate elongation by RNA polymerase II. H2BK120Ub also acts as a regulator of mRNA splicing: deubiquitination by USP49 is required for efficient cotranscriptional splicing of a large set of exons (By similarity).</text>
</comment>
<comment type="PTM">
    <text evidence="3 9">Phosphorylated on Ser-15 (H2BS14ph) by STK4/MST1 during apoptosis; which facilitates apoptotic chromatin condensation. Also phosphorylated on Ser-15 in response to DNA double strand breaks (DSBs), and in correlation with somatic hypermutation and immunoglobulin class-switch recombination. Phosphorylation at Ser-37 (H2BS36ph) by AMPK in response to stress promotes transcription (By similarity).</text>
</comment>
<comment type="PTM">
    <text evidence="3 11">ADP-ribosylated by PARP1 or PARP2 on Ser-7 (H2BS6ADPr) in response to DNA damage (By similarity). H2BS6ADPr promotes recruitment of CHD1L (By similarity). Mono-ADP-ribosylated on Glu-3 (H2BE2ADPr) by PARP3 in response to single-strand breaks (By similarity). Poly ADP-ribosylation on Glu-36 (H2BE35ADPr) by PARP1 regulates adipogenesis: it inhibits phosphorylation at Ser-37 (H2BS36ph), thereby blocking expression of pro-adipogenetic genes (By similarity).</text>
</comment>
<comment type="PTM">
    <text evidence="3">Crotonylation (Kcr) is specifically present in male germ cells and marks testis-specific genes in post-meiotic cells, including X-linked genes that escape sex chromosome inactivation in haploid cells. Crotonylation marks active promoters and enhancers and confers resistance to transcriptional repressors. It is also associated with post-meiotically activated genes on autosomes (By similarity).</text>
</comment>
<comment type="PTM">
    <text evidence="5">GlcNAcylation at Ser-113 promotes monoubiquitination of Lys-121. It fluctuates in response to extracellular glucose, and associates with transcribed genes (By similarity).</text>
</comment>
<comment type="PTM">
    <text evidence="3">Lactylated in macrophages by EP300/P300 by using lactoyl-CoA directly derived from endogenous or exogenous lactate, leading to stimulates gene transcription.</text>
</comment>
<comment type="similarity">
    <text evidence="14">Belongs to the histone H2B family.</text>
</comment>
<gene>
    <name evidence="7" type="primary">H2BC21</name>
</gene>
<organism>
    <name type="scientific">Pongo abelii</name>
    <name type="common">Sumatran orangutan</name>
    <name type="synonym">Pongo pygmaeus abelii</name>
    <dbReference type="NCBI Taxonomy" id="9601"/>
    <lineage>
        <taxon>Eukaryota</taxon>
        <taxon>Metazoa</taxon>
        <taxon>Chordata</taxon>
        <taxon>Craniata</taxon>
        <taxon>Vertebrata</taxon>
        <taxon>Euteleostomi</taxon>
        <taxon>Mammalia</taxon>
        <taxon>Eutheria</taxon>
        <taxon>Euarchontoglires</taxon>
        <taxon>Primates</taxon>
        <taxon>Haplorrhini</taxon>
        <taxon>Catarrhini</taxon>
        <taxon>Hominidae</taxon>
        <taxon>Pongo</taxon>
    </lineage>
</organism>
<evidence type="ECO:0000250" key="1"/>
<evidence type="ECO:0000250" key="2">
    <source>
        <dbReference type="UniProtKB" id="P23527"/>
    </source>
</evidence>
<evidence type="ECO:0000250" key="3">
    <source>
        <dbReference type="UniProtKB" id="P33778"/>
    </source>
</evidence>
<evidence type="ECO:0000250" key="4">
    <source>
        <dbReference type="UniProtKB" id="P58876"/>
    </source>
</evidence>
<evidence type="ECO:0000250" key="5">
    <source>
        <dbReference type="UniProtKB" id="P62807"/>
    </source>
</evidence>
<evidence type="ECO:0000250" key="6">
    <source>
        <dbReference type="UniProtKB" id="Q00729"/>
    </source>
</evidence>
<evidence type="ECO:0000250" key="7">
    <source>
        <dbReference type="UniProtKB" id="Q16778"/>
    </source>
</evidence>
<evidence type="ECO:0000250" key="8">
    <source>
        <dbReference type="UniProtKB" id="Q5QNW6"/>
    </source>
</evidence>
<evidence type="ECO:0000250" key="9">
    <source>
        <dbReference type="UniProtKB" id="Q64475"/>
    </source>
</evidence>
<evidence type="ECO:0000250" key="10">
    <source>
        <dbReference type="UniProtKB" id="Q64524"/>
    </source>
</evidence>
<evidence type="ECO:0000250" key="11">
    <source>
        <dbReference type="UniProtKB" id="Q6ZWY9"/>
    </source>
</evidence>
<evidence type="ECO:0000250" key="12">
    <source>
        <dbReference type="UniProtKB" id="Q96A08"/>
    </source>
</evidence>
<evidence type="ECO:0000256" key="13">
    <source>
        <dbReference type="SAM" id="MobiDB-lite"/>
    </source>
</evidence>
<evidence type="ECO:0000305" key="14"/>
<name>H2B2E_PONAB</name>
<proteinExistence type="evidence at transcript level"/>
<dbReference type="EMBL" id="CR858221">
    <property type="protein sequence ID" value="CAH90459.1"/>
    <property type="molecule type" value="mRNA"/>
</dbReference>
<dbReference type="RefSeq" id="NP_001125236.1">
    <property type="nucleotide sequence ID" value="NM_001131764.1"/>
</dbReference>
<dbReference type="SMR" id="Q5RCP8"/>
<dbReference type="GlyCosmos" id="Q5RCP8">
    <property type="glycosylation" value="1 site, No reported glycans"/>
</dbReference>
<dbReference type="GeneID" id="100172130"/>
<dbReference type="KEGG" id="pon:100172130"/>
<dbReference type="CTD" id="8349"/>
<dbReference type="InParanoid" id="Q5RCP8"/>
<dbReference type="OrthoDB" id="1733721at2759"/>
<dbReference type="Proteomes" id="UP000001595">
    <property type="component" value="Unplaced"/>
</dbReference>
<dbReference type="GO" id="GO:0000786">
    <property type="term" value="C:nucleosome"/>
    <property type="evidence" value="ECO:0007669"/>
    <property type="project" value="UniProtKB-KW"/>
</dbReference>
<dbReference type="GO" id="GO:0005634">
    <property type="term" value="C:nucleus"/>
    <property type="evidence" value="ECO:0007669"/>
    <property type="project" value="UniProtKB-SubCell"/>
</dbReference>
<dbReference type="GO" id="GO:0003677">
    <property type="term" value="F:DNA binding"/>
    <property type="evidence" value="ECO:0007669"/>
    <property type="project" value="UniProtKB-KW"/>
</dbReference>
<dbReference type="GO" id="GO:0046982">
    <property type="term" value="F:protein heterodimerization activity"/>
    <property type="evidence" value="ECO:0007669"/>
    <property type="project" value="InterPro"/>
</dbReference>
<dbReference type="GO" id="GO:0030527">
    <property type="term" value="F:structural constituent of chromatin"/>
    <property type="evidence" value="ECO:0007669"/>
    <property type="project" value="InterPro"/>
</dbReference>
<dbReference type="GO" id="GO:0042742">
    <property type="term" value="P:defense response to bacterium"/>
    <property type="evidence" value="ECO:0007669"/>
    <property type="project" value="UniProtKB-KW"/>
</dbReference>
<dbReference type="CDD" id="cd22910">
    <property type="entry name" value="HFD_H2B"/>
    <property type="match status" value="1"/>
</dbReference>
<dbReference type="FunFam" id="1.10.20.10:FF:000003">
    <property type="entry name" value="Histone H2B"/>
    <property type="match status" value="1"/>
</dbReference>
<dbReference type="Gene3D" id="1.10.20.10">
    <property type="entry name" value="Histone, subunit A"/>
    <property type="match status" value="1"/>
</dbReference>
<dbReference type="InterPro" id="IPR009072">
    <property type="entry name" value="Histone-fold"/>
</dbReference>
<dbReference type="InterPro" id="IPR007125">
    <property type="entry name" value="Histone_H2A/H2B/H3"/>
</dbReference>
<dbReference type="InterPro" id="IPR000558">
    <property type="entry name" value="Histone_H2B"/>
</dbReference>
<dbReference type="InterPro" id="IPR055333">
    <property type="entry name" value="HISTONE_H2B_site"/>
</dbReference>
<dbReference type="PANTHER" id="PTHR23428">
    <property type="entry name" value="HISTONE H2B"/>
    <property type="match status" value="1"/>
</dbReference>
<dbReference type="Pfam" id="PF00125">
    <property type="entry name" value="Histone"/>
    <property type="match status" value="1"/>
</dbReference>
<dbReference type="PRINTS" id="PR00621">
    <property type="entry name" value="HISTONEH2B"/>
</dbReference>
<dbReference type="SMART" id="SM00427">
    <property type="entry name" value="H2B"/>
    <property type="match status" value="1"/>
</dbReference>
<dbReference type="SUPFAM" id="SSF47113">
    <property type="entry name" value="Histone-fold"/>
    <property type="match status" value="1"/>
</dbReference>
<dbReference type="PROSITE" id="PS00357">
    <property type="entry name" value="HISTONE_H2B"/>
    <property type="match status" value="1"/>
</dbReference>